<evidence type="ECO:0000255" key="1">
    <source>
        <dbReference type="HAMAP-Rule" id="MF_01326"/>
    </source>
</evidence>
<evidence type="ECO:0000305" key="2"/>
<protein>
    <recommendedName>
        <fullName evidence="1">Large ribosomal subunit protein uL24</fullName>
    </recommendedName>
    <alternativeName>
        <fullName evidence="2">50S ribosomal protein L24</fullName>
    </alternativeName>
</protein>
<name>RL24_STAA2</name>
<accession>A6U3W4</accession>
<organism>
    <name type="scientific">Staphylococcus aureus (strain JH1)</name>
    <dbReference type="NCBI Taxonomy" id="359787"/>
    <lineage>
        <taxon>Bacteria</taxon>
        <taxon>Bacillati</taxon>
        <taxon>Bacillota</taxon>
        <taxon>Bacilli</taxon>
        <taxon>Bacillales</taxon>
        <taxon>Staphylococcaceae</taxon>
        <taxon>Staphylococcus</taxon>
    </lineage>
</organism>
<gene>
    <name evidence="1" type="primary">rplX</name>
    <name type="ordered locus">SaurJH1_2307</name>
</gene>
<dbReference type="EMBL" id="CP000736">
    <property type="protein sequence ID" value="ABR53132.1"/>
    <property type="molecule type" value="Genomic_DNA"/>
</dbReference>
<dbReference type="SMR" id="A6U3W4"/>
<dbReference type="KEGG" id="sah:SaurJH1_2307"/>
<dbReference type="HOGENOM" id="CLU_093315_2_0_9"/>
<dbReference type="GO" id="GO:1990904">
    <property type="term" value="C:ribonucleoprotein complex"/>
    <property type="evidence" value="ECO:0007669"/>
    <property type="project" value="UniProtKB-KW"/>
</dbReference>
<dbReference type="GO" id="GO:0005840">
    <property type="term" value="C:ribosome"/>
    <property type="evidence" value="ECO:0007669"/>
    <property type="project" value="UniProtKB-KW"/>
</dbReference>
<dbReference type="GO" id="GO:0019843">
    <property type="term" value="F:rRNA binding"/>
    <property type="evidence" value="ECO:0007669"/>
    <property type="project" value="UniProtKB-UniRule"/>
</dbReference>
<dbReference type="GO" id="GO:0003735">
    <property type="term" value="F:structural constituent of ribosome"/>
    <property type="evidence" value="ECO:0007669"/>
    <property type="project" value="InterPro"/>
</dbReference>
<dbReference type="GO" id="GO:0006412">
    <property type="term" value="P:translation"/>
    <property type="evidence" value="ECO:0007669"/>
    <property type="project" value="UniProtKB-UniRule"/>
</dbReference>
<dbReference type="CDD" id="cd06089">
    <property type="entry name" value="KOW_RPL26"/>
    <property type="match status" value="1"/>
</dbReference>
<dbReference type="FunFam" id="2.30.30.30:FF:000004">
    <property type="entry name" value="50S ribosomal protein L24"/>
    <property type="match status" value="1"/>
</dbReference>
<dbReference type="Gene3D" id="2.30.30.30">
    <property type="match status" value="1"/>
</dbReference>
<dbReference type="HAMAP" id="MF_01326_B">
    <property type="entry name" value="Ribosomal_uL24_B"/>
    <property type="match status" value="1"/>
</dbReference>
<dbReference type="InterPro" id="IPR005824">
    <property type="entry name" value="KOW"/>
</dbReference>
<dbReference type="InterPro" id="IPR014722">
    <property type="entry name" value="Rib_uL2_dom2"/>
</dbReference>
<dbReference type="InterPro" id="IPR003256">
    <property type="entry name" value="Ribosomal_uL24"/>
</dbReference>
<dbReference type="InterPro" id="IPR005825">
    <property type="entry name" value="Ribosomal_uL24_CS"/>
</dbReference>
<dbReference type="InterPro" id="IPR041988">
    <property type="entry name" value="Ribosomal_uL24_KOW"/>
</dbReference>
<dbReference type="InterPro" id="IPR008991">
    <property type="entry name" value="Translation_prot_SH3-like_sf"/>
</dbReference>
<dbReference type="NCBIfam" id="TIGR01079">
    <property type="entry name" value="rplX_bact"/>
    <property type="match status" value="1"/>
</dbReference>
<dbReference type="PANTHER" id="PTHR12903">
    <property type="entry name" value="MITOCHONDRIAL RIBOSOMAL PROTEIN L24"/>
    <property type="match status" value="1"/>
</dbReference>
<dbReference type="Pfam" id="PF00467">
    <property type="entry name" value="KOW"/>
    <property type="match status" value="1"/>
</dbReference>
<dbReference type="Pfam" id="PF17136">
    <property type="entry name" value="ribosomal_L24"/>
    <property type="match status" value="1"/>
</dbReference>
<dbReference type="SMART" id="SM00739">
    <property type="entry name" value="KOW"/>
    <property type="match status" value="1"/>
</dbReference>
<dbReference type="SUPFAM" id="SSF50104">
    <property type="entry name" value="Translation proteins SH3-like domain"/>
    <property type="match status" value="1"/>
</dbReference>
<dbReference type="PROSITE" id="PS01108">
    <property type="entry name" value="RIBOSOMAL_L24"/>
    <property type="match status" value="1"/>
</dbReference>
<comment type="function">
    <text evidence="1">One of two assembly initiator proteins, it binds directly to the 5'-end of the 23S rRNA, where it nucleates assembly of the 50S subunit.</text>
</comment>
<comment type="function">
    <text evidence="1">One of the proteins that surrounds the polypeptide exit tunnel on the outside of the subunit.</text>
</comment>
<comment type="subunit">
    <text evidence="1">Part of the 50S ribosomal subunit.</text>
</comment>
<comment type="similarity">
    <text evidence="1">Belongs to the universal ribosomal protein uL24 family.</text>
</comment>
<feature type="chain" id="PRO_1000086499" description="Large ribosomal subunit protein uL24">
    <location>
        <begin position="1"/>
        <end position="105"/>
    </location>
</feature>
<reference key="1">
    <citation type="submission" date="2007-06" db="EMBL/GenBank/DDBJ databases">
        <title>Complete sequence of chromosome of Staphylococcus aureus subsp. aureus JH1.</title>
        <authorList>
            <consortium name="US DOE Joint Genome Institute"/>
            <person name="Copeland A."/>
            <person name="Lucas S."/>
            <person name="Lapidus A."/>
            <person name="Barry K."/>
            <person name="Detter J.C."/>
            <person name="Glavina del Rio T."/>
            <person name="Hammon N."/>
            <person name="Israni S."/>
            <person name="Dalin E."/>
            <person name="Tice H."/>
            <person name="Pitluck S."/>
            <person name="Chain P."/>
            <person name="Malfatti S."/>
            <person name="Shin M."/>
            <person name="Vergez L."/>
            <person name="Schmutz J."/>
            <person name="Larimer F."/>
            <person name="Land M."/>
            <person name="Hauser L."/>
            <person name="Kyrpides N."/>
            <person name="Ivanova N."/>
            <person name="Tomasz A."/>
            <person name="Richardson P."/>
        </authorList>
    </citation>
    <scope>NUCLEOTIDE SEQUENCE [LARGE SCALE GENOMIC DNA]</scope>
    <source>
        <strain>JH1</strain>
    </source>
</reference>
<keyword id="KW-0687">Ribonucleoprotein</keyword>
<keyword id="KW-0689">Ribosomal protein</keyword>
<keyword id="KW-0694">RNA-binding</keyword>
<keyword id="KW-0699">rRNA-binding</keyword>
<proteinExistence type="inferred from homology"/>
<sequence length="105" mass="11536">MHIKKGDNVKVIAGKDKGKEGKVIATLPKKDRVVVEGVNIMKKHQKPTQLNPEGGILETEAAIHVSNVQLLDPKTNEPTRVGYKFVDGKKVRIAKKSGEEIKSNN</sequence>